<comment type="catalytic activity">
    <reaction>
        <text>holo-[ACP] + malonyl-CoA = malonyl-[ACP] + CoA</text>
        <dbReference type="Rhea" id="RHEA:41792"/>
        <dbReference type="Rhea" id="RHEA-COMP:9623"/>
        <dbReference type="Rhea" id="RHEA-COMP:9685"/>
        <dbReference type="ChEBI" id="CHEBI:57287"/>
        <dbReference type="ChEBI" id="CHEBI:57384"/>
        <dbReference type="ChEBI" id="CHEBI:64479"/>
        <dbReference type="ChEBI" id="CHEBI:78449"/>
        <dbReference type="EC" id="2.3.1.39"/>
    </reaction>
</comment>
<comment type="pathway">
    <text>Lipid metabolism; fatty acid biosynthesis.</text>
</comment>
<comment type="similarity">
    <text evidence="3">Belongs to the FabD family.</text>
</comment>
<comment type="sequence caution" evidence="3">
    <conflict type="erroneous initiation">
        <sequence resource="EMBL-CDS" id="AFP40681"/>
    </conflict>
    <text>Extended N-terminus.</text>
</comment>
<evidence type="ECO:0000250" key="1"/>
<evidence type="ECO:0000269" key="2">
    <source>
    </source>
</evidence>
<evidence type="ECO:0000305" key="3"/>
<name>FABD_MYCS2</name>
<organism>
    <name type="scientific">Mycolicibacterium smegmatis (strain ATCC 700084 / mc(2)155)</name>
    <name type="common">Mycobacterium smegmatis</name>
    <dbReference type="NCBI Taxonomy" id="246196"/>
    <lineage>
        <taxon>Bacteria</taxon>
        <taxon>Bacillati</taxon>
        <taxon>Actinomycetota</taxon>
        <taxon>Actinomycetes</taxon>
        <taxon>Mycobacteriales</taxon>
        <taxon>Mycobacteriaceae</taxon>
        <taxon>Mycolicibacterium</taxon>
    </lineage>
</organism>
<sequence length="290" mass="29676">MLTPWLELPGAADRLAAWSQISGLDLTTLGTTATAEEITDTAVTQPLVVAATLLAHEELTKRGHSAAETIVAGHSVGEIAAYAIAGVISADDAVKLAATRGAEMAKACAVEPTGMAAVLGGDEAEVLARLEALDLVPANRNAAGQIVAAGAVAALDKLAEDPPAKARVRKLATAGAFHTHYMASALDGYAAAAQSVTTSEPTATLLSNADGQPVASAADAMEKLVAQLTKPVRWDLCTATLRDRFQNAESAGIVEFPPAGTLVGIAKRELKGTPTRAIKSPEDLDGLDQL</sequence>
<reference key="1">
    <citation type="submission" date="2006-10" db="EMBL/GenBank/DDBJ databases">
        <authorList>
            <person name="Fleischmann R.D."/>
            <person name="Dodson R.J."/>
            <person name="Haft D.H."/>
            <person name="Merkel J.S."/>
            <person name="Nelson W.C."/>
            <person name="Fraser C.M."/>
        </authorList>
    </citation>
    <scope>NUCLEOTIDE SEQUENCE [LARGE SCALE GENOMIC DNA]</scope>
    <source>
        <strain>ATCC 700084 / mc(2)155</strain>
    </source>
</reference>
<reference key="2">
    <citation type="journal article" date="2007" name="Genome Biol.">
        <title>Interrupted coding sequences in Mycobacterium smegmatis: authentic mutations or sequencing errors?</title>
        <authorList>
            <person name="Deshayes C."/>
            <person name="Perrodou E."/>
            <person name="Gallien S."/>
            <person name="Euphrasie D."/>
            <person name="Schaeffer C."/>
            <person name="Van-Dorsselaer A."/>
            <person name="Poch O."/>
            <person name="Lecompte O."/>
            <person name="Reyrat J.-M."/>
        </authorList>
    </citation>
    <scope>NUCLEOTIDE SEQUENCE [LARGE SCALE GENOMIC DNA]</scope>
    <source>
        <strain>ATCC 700084 / mc(2)155</strain>
    </source>
</reference>
<reference key="3">
    <citation type="journal article" date="2009" name="Genome Res.">
        <title>Ortho-proteogenomics: multiple proteomes investigation through orthology and a new MS-based protocol.</title>
        <authorList>
            <person name="Gallien S."/>
            <person name="Perrodou E."/>
            <person name="Carapito C."/>
            <person name="Deshayes C."/>
            <person name="Reyrat J.-M."/>
            <person name="Van Dorsselaer A."/>
            <person name="Poch O."/>
            <person name="Schaeffer C."/>
            <person name="Lecompte O."/>
        </authorList>
    </citation>
    <scope>NUCLEOTIDE SEQUENCE [LARGE SCALE GENOMIC DNA]</scope>
    <source>
        <strain>ATCC 700084 / mc(2)155</strain>
    </source>
</reference>
<reference key="4">
    <citation type="journal article" date="2010" name="Mol. Biosyst.">
        <title>Expansion of the mycobacterial 'PUPylome'.</title>
        <authorList>
            <person name="Watrous J."/>
            <person name="Burns K."/>
            <person name="Liu W.T."/>
            <person name="Patel A."/>
            <person name="Hook V."/>
            <person name="Bafna V."/>
            <person name="Barry C.E. III"/>
            <person name="Bark S."/>
            <person name="Dorrestein P.C."/>
        </authorList>
    </citation>
    <scope>PUPYLATION AT LYS-157</scope>
    <scope>IDENTIFICATION BY MASS SPECTROMETRY</scope>
</reference>
<accession>A0R0B2</accession>
<accession>I7GBV9</accession>
<dbReference type="EC" id="2.3.1.39"/>
<dbReference type="EMBL" id="CP000480">
    <property type="protein sequence ID" value="ABK74111.1"/>
    <property type="molecule type" value="Genomic_DNA"/>
</dbReference>
<dbReference type="EMBL" id="CP001663">
    <property type="protein sequence ID" value="AFP40681.1"/>
    <property type="status" value="ALT_INIT"/>
    <property type="molecule type" value="Genomic_DNA"/>
</dbReference>
<dbReference type="RefSeq" id="YP_888600.1">
    <property type="nucleotide sequence ID" value="NC_008596.1"/>
</dbReference>
<dbReference type="SMR" id="A0R0B2"/>
<dbReference type="STRING" id="246196.MSMEG_4325"/>
<dbReference type="PaxDb" id="246196-MSMEI_4225"/>
<dbReference type="KEGG" id="msg:MSMEI_4225"/>
<dbReference type="KEGG" id="msm:MSMEG_4325"/>
<dbReference type="PATRIC" id="fig|246196.19.peg.4243"/>
<dbReference type="eggNOG" id="COG0331">
    <property type="taxonomic scope" value="Bacteria"/>
</dbReference>
<dbReference type="OrthoDB" id="3248271at2"/>
<dbReference type="UniPathway" id="UPA00094"/>
<dbReference type="Proteomes" id="UP000000757">
    <property type="component" value="Chromosome"/>
</dbReference>
<dbReference type="Proteomes" id="UP000006158">
    <property type="component" value="Chromosome"/>
</dbReference>
<dbReference type="GO" id="GO:0005829">
    <property type="term" value="C:cytosol"/>
    <property type="evidence" value="ECO:0007669"/>
    <property type="project" value="TreeGrafter"/>
</dbReference>
<dbReference type="GO" id="GO:0004314">
    <property type="term" value="F:[acyl-carrier-protein] S-malonyltransferase activity"/>
    <property type="evidence" value="ECO:0007669"/>
    <property type="project" value="UniProtKB-EC"/>
</dbReference>
<dbReference type="GO" id="GO:0006633">
    <property type="term" value="P:fatty acid biosynthetic process"/>
    <property type="evidence" value="ECO:0007669"/>
    <property type="project" value="UniProtKB-UniPathway"/>
</dbReference>
<dbReference type="FunFam" id="3.30.70.250:FF:000002">
    <property type="entry name" value="Malonyl CoA-ACP transacylase"/>
    <property type="match status" value="1"/>
</dbReference>
<dbReference type="Gene3D" id="3.30.70.250">
    <property type="entry name" value="Malonyl-CoA ACP transacylase, ACP-binding"/>
    <property type="match status" value="1"/>
</dbReference>
<dbReference type="Gene3D" id="3.40.366.10">
    <property type="entry name" value="Malonyl-Coenzyme A Acyl Carrier Protein, domain 2"/>
    <property type="match status" value="1"/>
</dbReference>
<dbReference type="InterPro" id="IPR001227">
    <property type="entry name" value="Ac_transferase_dom_sf"/>
</dbReference>
<dbReference type="InterPro" id="IPR014043">
    <property type="entry name" value="Acyl_transferase_dom"/>
</dbReference>
<dbReference type="InterPro" id="IPR016035">
    <property type="entry name" value="Acyl_Trfase/lysoPLipase"/>
</dbReference>
<dbReference type="InterPro" id="IPR050858">
    <property type="entry name" value="Mal-CoA-ACP_Trans/PKS_FabD"/>
</dbReference>
<dbReference type="InterPro" id="IPR016036">
    <property type="entry name" value="Malonyl_transacylase_ACP-bd"/>
</dbReference>
<dbReference type="PANTHER" id="PTHR42681">
    <property type="entry name" value="MALONYL-COA-ACYL CARRIER PROTEIN TRANSACYLASE, MITOCHONDRIAL"/>
    <property type="match status" value="1"/>
</dbReference>
<dbReference type="PANTHER" id="PTHR42681:SF1">
    <property type="entry name" value="MALONYL-COA-ACYL CARRIER PROTEIN TRANSACYLASE, MITOCHONDRIAL"/>
    <property type="match status" value="1"/>
</dbReference>
<dbReference type="Pfam" id="PF00698">
    <property type="entry name" value="Acyl_transf_1"/>
    <property type="match status" value="1"/>
</dbReference>
<dbReference type="SMART" id="SM00827">
    <property type="entry name" value="PKS_AT"/>
    <property type="match status" value="1"/>
</dbReference>
<dbReference type="SUPFAM" id="SSF52151">
    <property type="entry name" value="FabD/lysophospholipase-like"/>
    <property type="match status" value="1"/>
</dbReference>
<dbReference type="SUPFAM" id="SSF55048">
    <property type="entry name" value="Probable ACP-binding domain of malonyl-CoA ACP transacylase"/>
    <property type="match status" value="1"/>
</dbReference>
<proteinExistence type="evidence at protein level"/>
<gene>
    <name type="primary">fabD</name>
    <name type="ordered locus">MSMEG_4325</name>
    <name type="ordered locus">MSMEI_4225</name>
</gene>
<keyword id="KW-0012">Acyltransferase</keyword>
<keyword id="KW-0275">Fatty acid biosynthesis</keyword>
<keyword id="KW-0276">Fatty acid metabolism</keyword>
<keyword id="KW-1017">Isopeptide bond</keyword>
<keyword id="KW-0444">Lipid biosynthesis</keyword>
<keyword id="KW-0443">Lipid metabolism</keyword>
<keyword id="KW-1185">Reference proteome</keyword>
<keyword id="KW-0808">Transferase</keyword>
<keyword id="KW-0832">Ubl conjugation</keyword>
<feature type="chain" id="PRO_0000396808" description="Malonyl CoA-acyl carrier protein transacylase">
    <location>
        <begin position="1"/>
        <end position="290"/>
    </location>
</feature>
<feature type="active site" evidence="1">
    <location>
        <position position="75"/>
    </location>
</feature>
<feature type="active site" evidence="1">
    <location>
        <position position="178"/>
    </location>
</feature>
<feature type="cross-link" description="Isoglutamyl lysine isopeptide (Lys-Gln) (interchain with Q-Cter in protein Pup)" evidence="2">
    <location>
        <position position="157"/>
    </location>
</feature>
<protein>
    <recommendedName>
        <fullName>Malonyl CoA-acyl carrier protein transacylase</fullName>
        <shortName>MCT</shortName>
        <ecNumber>2.3.1.39</ecNumber>
    </recommendedName>
</protein>